<proteinExistence type="inferred from homology"/>
<keyword id="KW-0255">Endonuclease</keyword>
<keyword id="KW-0378">Hydrolase</keyword>
<keyword id="KW-0479">Metal-binding</keyword>
<keyword id="KW-0540">Nuclease</keyword>
<keyword id="KW-0819">tRNA processing</keyword>
<keyword id="KW-0862">Zinc</keyword>
<gene>
    <name evidence="1" type="primary">rnz</name>
    <name type="ordered locus">MAV_1774</name>
</gene>
<sequence length="280" mass="29279">MIEVTLLGTGSPIPDPNRAGPSTLVRAGGQVFLVDCGRGVLQRAAAVGVGAAGLSTLLLTHLHSDHVGDLGDVLITRWVSTFTPDPVPLPIIGPPGTAELVAATLNALRHDIGYRIAHHADLNAPPAVDVREHTDGPVWDRDGVSIRVAPTDHRPVAPTIGFRVDYQGASVVLAGDTVPCAGLDELAAGAGALVHTVIRKDIVATIPQQRLQDICDYHSSVEQAAATAARAGVGTLVMTHYVPALVAGQEEQWRALAAREFAGRVELGDDLHRVQVDAPS</sequence>
<comment type="function">
    <text evidence="1">Zinc phosphodiesterase, which displays some tRNA 3'-processing endonuclease activity. Probably involved in tRNA maturation, by removing a 3'-trailer from precursor tRNA.</text>
</comment>
<comment type="catalytic activity">
    <reaction evidence="1">
        <text>Endonucleolytic cleavage of RNA, removing extra 3' nucleotides from tRNA precursor, generating 3' termini of tRNAs. A 3'-hydroxy group is left at the tRNA terminus and a 5'-phosphoryl group is left at the trailer molecule.</text>
        <dbReference type="EC" id="3.1.26.11"/>
    </reaction>
</comment>
<comment type="cofactor">
    <cofactor evidence="1">
        <name>Zn(2+)</name>
        <dbReference type="ChEBI" id="CHEBI:29105"/>
    </cofactor>
    <text evidence="1">Binds 2 Zn(2+) ions.</text>
</comment>
<comment type="subunit">
    <text evidence="1">Homodimer.</text>
</comment>
<comment type="similarity">
    <text evidence="1">Belongs to the RNase Z family.</text>
</comment>
<accession>A0QDL1</accession>
<name>RNZ_MYCA1</name>
<evidence type="ECO:0000255" key="1">
    <source>
        <dbReference type="HAMAP-Rule" id="MF_01818"/>
    </source>
</evidence>
<reference key="1">
    <citation type="submission" date="2006-10" db="EMBL/GenBank/DDBJ databases">
        <authorList>
            <person name="Fleischmann R.D."/>
            <person name="Dodson R.J."/>
            <person name="Haft D.H."/>
            <person name="Merkel J.S."/>
            <person name="Nelson W.C."/>
            <person name="Fraser C.M."/>
        </authorList>
    </citation>
    <scope>NUCLEOTIDE SEQUENCE [LARGE SCALE GENOMIC DNA]</scope>
    <source>
        <strain>104</strain>
    </source>
</reference>
<protein>
    <recommendedName>
        <fullName evidence="1">Ribonuclease Z</fullName>
        <shortName evidence="1">RNase Z</shortName>
        <ecNumber evidence="1">3.1.26.11</ecNumber>
    </recommendedName>
    <alternativeName>
        <fullName evidence="1">tRNA 3 endonuclease</fullName>
    </alternativeName>
    <alternativeName>
        <fullName evidence="1">tRNase Z</fullName>
    </alternativeName>
</protein>
<dbReference type="EC" id="3.1.26.11" evidence="1"/>
<dbReference type="EMBL" id="CP000479">
    <property type="protein sequence ID" value="ABK69073.1"/>
    <property type="molecule type" value="Genomic_DNA"/>
</dbReference>
<dbReference type="RefSeq" id="WP_009976043.1">
    <property type="nucleotide sequence ID" value="NC_008595.1"/>
</dbReference>
<dbReference type="SMR" id="A0QDL1"/>
<dbReference type="KEGG" id="mav:MAV_1774"/>
<dbReference type="HOGENOM" id="CLU_031317_0_0_11"/>
<dbReference type="Proteomes" id="UP000001574">
    <property type="component" value="Chromosome"/>
</dbReference>
<dbReference type="GO" id="GO:0042781">
    <property type="term" value="F:3'-tRNA processing endoribonuclease activity"/>
    <property type="evidence" value="ECO:0007669"/>
    <property type="project" value="UniProtKB-UniRule"/>
</dbReference>
<dbReference type="GO" id="GO:0046872">
    <property type="term" value="F:metal ion binding"/>
    <property type="evidence" value="ECO:0007669"/>
    <property type="project" value="UniProtKB-KW"/>
</dbReference>
<dbReference type="CDD" id="cd07719">
    <property type="entry name" value="arylsulfatase_AtsA-like_MBL-fold"/>
    <property type="match status" value="1"/>
</dbReference>
<dbReference type="Gene3D" id="3.60.15.10">
    <property type="entry name" value="Ribonuclease Z/Hydroxyacylglutathione hydrolase-like"/>
    <property type="match status" value="1"/>
</dbReference>
<dbReference type="HAMAP" id="MF_01818">
    <property type="entry name" value="RNase_Z_BN"/>
    <property type="match status" value="1"/>
</dbReference>
<dbReference type="InterPro" id="IPR044094">
    <property type="entry name" value="AtsA-like_MBL-fold"/>
</dbReference>
<dbReference type="InterPro" id="IPR001279">
    <property type="entry name" value="Metallo-B-lactamas"/>
</dbReference>
<dbReference type="InterPro" id="IPR036866">
    <property type="entry name" value="RibonucZ/Hydroxyglut_hydro"/>
</dbReference>
<dbReference type="InterPro" id="IPR013471">
    <property type="entry name" value="RNase_Z/BN"/>
</dbReference>
<dbReference type="NCBIfam" id="NF000806">
    <property type="entry name" value="PRK00055.2-4"/>
    <property type="match status" value="1"/>
</dbReference>
<dbReference type="PANTHER" id="PTHR46018">
    <property type="entry name" value="ZINC PHOSPHODIESTERASE ELAC PROTEIN 1"/>
    <property type="match status" value="1"/>
</dbReference>
<dbReference type="PANTHER" id="PTHR46018:SF2">
    <property type="entry name" value="ZINC PHOSPHODIESTERASE ELAC PROTEIN 1"/>
    <property type="match status" value="1"/>
</dbReference>
<dbReference type="Pfam" id="PF12706">
    <property type="entry name" value="Lactamase_B_2"/>
    <property type="match status" value="1"/>
</dbReference>
<dbReference type="SMART" id="SM00849">
    <property type="entry name" value="Lactamase_B"/>
    <property type="match status" value="1"/>
</dbReference>
<dbReference type="SUPFAM" id="SSF56281">
    <property type="entry name" value="Metallo-hydrolase/oxidoreductase"/>
    <property type="match status" value="1"/>
</dbReference>
<feature type="chain" id="PRO_1000070301" description="Ribonuclease Z">
    <location>
        <begin position="1"/>
        <end position="280"/>
    </location>
</feature>
<feature type="active site" description="Proton acceptor" evidence="1">
    <location>
        <position position="65"/>
    </location>
</feature>
<feature type="binding site" evidence="1">
    <location>
        <position position="61"/>
    </location>
    <ligand>
        <name>Zn(2+)</name>
        <dbReference type="ChEBI" id="CHEBI:29105"/>
        <label>1</label>
        <note>catalytic</note>
    </ligand>
</feature>
<feature type="binding site" evidence="1">
    <location>
        <position position="63"/>
    </location>
    <ligand>
        <name>Zn(2+)</name>
        <dbReference type="ChEBI" id="CHEBI:29105"/>
        <label>1</label>
        <note>catalytic</note>
    </ligand>
</feature>
<feature type="binding site" evidence="1">
    <location>
        <position position="65"/>
    </location>
    <ligand>
        <name>Zn(2+)</name>
        <dbReference type="ChEBI" id="CHEBI:29105"/>
        <label>2</label>
        <note>catalytic</note>
    </ligand>
</feature>
<feature type="binding site" evidence="1">
    <location>
        <position position="66"/>
    </location>
    <ligand>
        <name>Zn(2+)</name>
        <dbReference type="ChEBI" id="CHEBI:29105"/>
        <label>2</label>
        <note>catalytic</note>
    </ligand>
</feature>
<feature type="binding site" evidence="1">
    <location>
        <position position="153"/>
    </location>
    <ligand>
        <name>Zn(2+)</name>
        <dbReference type="ChEBI" id="CHEBI:29105"/>
        <label>1</label>
        <note>catalytic</note>
    </ligand>
</feature>
<feature type="binding site" evidence="1">
    <location>
        <position position="176"/>
    </location>
    <ligand>
        <name>Zn(2+)</name>
        <dbReference type="ChEBI" id="CHEBI:29105"/>
        <label>1</label>
        <note>catalytic</note>
    </ligand>
</feature>
<feature type="binding site" evidence="1">
    <location>
        <position position="176"/>
    </location>
    <ligand>
        <name>Zn(2+)</name>
        <dbReference type="ChEBI" id="CHEBI:29105"/>
        <label>2</label>
        <note>catalytic</note>
    </ligand>
</feature>
<feature type="binding site" evidence="1">
    <location>
        <position position="240"/>
    </location>
    <ligand>
        <name>Zn(2+)</name>
        <dbReference type="ChEBI" id="CHEBI:29105"/>
        <label>2</label>
        <note>catalytic</note>
    </ligand>
</feature>
<organism>
    <name type="scientific">Mycobacterium avium (strain 104)</name>
    <dbReference type="NCBI Taxonomy" id="243243"/>
    <lineage>
        <taxon>Bacteria</taxon>
        <taxon>Bacillati</taxon>
        <taxon>Actinomycetota</taxon>
        <taxon>Actinomycetes</taxon>
        <taxon>Mycobacteriales</taxon>
        <taxon>Mycobacteriaceae</taxon>
        <taxon>Mycobacterium</taxon>
        <taxon>Mycobacterium avium complex (MAC)</taxon>
    </lineage>
</organism>